<sequence length="164" mass="17121">MAFKDNAVELEERVVAINRVTKVVKGGRRLRFAALVVVGDRNGRVGFGTGKAQEVPEAIRKAVEAAKKNMIEVPMVGTTIPHEVRSEFGGARVLLKPAVEGAGVAAGGAVRAVVELAGVADITSKSLGSNTPINIVRATVEGLKQLKRAEEVASLRGVSVSDLA</sequence>
<keyword id="KW-1185">Reference proteome</keyword>
<keyword id="KW-0687">Ribonucleoprotein</keyword>
<keyword id="KW-0689">Ribosomal protein</keyword>
<keyword id="KW-0694">RNA-binding</keyword>
<keyword id="KW-0699">rRNA-binding</keyword>
<protein>
    <recommendedName>
        <fullName evidence="1">Small ribosomal subunit protein uS5</fullName>
    </recommendedName>
    <alternativeName>
        <fullName evidence="2">30S ribosomal protein S5</fullName>
    </alternativeName>
</protein>
<name>RS5_STRMU</name>
<comment type="function">
    <text evidence="1">With S4 and S12 plays an important role in translational accuracy.</text>
</comment>
<comment type="function">
    <text evidence="1">Located at the back of the 30S subunit body where it stabilizes the conformation of the head with respect to the body.</text>
</comment>
<comment type="subunit">
    <text evidence="1">Part of the 30S ribosomal subunit. Contacts proteins S4 and S8.</text>
</comment>
<comment type="domain">
    <text>The N-terminal domain interacts with the head of the 30S subunit; the C-terminal domain interacts with the body and contacts protein S4. The interaction surface between S4 and S5 is involved in control of translational fidelity.</text>
</comment>
<comment type="similarity">
    <text evidence="1">Belongs to the universal ribosomal protein uS5 family.</text>
</comment>
<proteinExistence type="inferred from homology"/>
<evidence type="ECO:0000255" key="1">
    <source>
        <dbReference type="HAMAP-Rule" id="MF_01307"/>
    </source>
</evidence>
<evidence type="ECO:0000305" key="2"/>
<organism>
    <name type="scientific">Streptococcus mutans serotype c (strain ATCC 700610 / UA159)</name>
    <dbReference type="NCBI Taxonomy" id="210007"/>
    <lineage>
        <taxon>Bacteria</taxon>
        <taxon>Bacillati</taxon>
        <taxon>Bacillota</taxon>
        <taxon>Bacilli</taxon>
        <taxon>Lactobacillales</taxon>
        <taxon>Streptococcaceae</taxon>
        <taxon>Streptococcus</taxon>
    </lineage>
</organism>
<dbReference type="EMBL" id="AE014133">
    <property type="protein sequence ID" value="AAN59613.1"/>
    <property type="molecule type" value="Genomic_DNA"/>
</dbReference>
<dbReference type="RefSeq" id="NP_722307.1">
    <property type="nucleotide sequence ID" value="NC_004350.2"/>
</dbReference>
<dbReference type="RefSeq" id="WP_002262323.1">
    <property type="nucleotide sequence ID" value="NC_004350.2"/>
</dbReference>
<dbReference type="SMR" id="P59125"/>
<dbReference type="STRING" id="210007.SMU_2009"/>
<dbReference type="GeneID" id="93860212"/>
<dbReference type="KEGG" id="smu:SMU_2009"/>
<dbReference type="PATRIC" id="fig|210007.7.peg.1790"/>
<dbReference type="eggNOG" id="COG0098">
    <property type="taxonomic scope" value="Bacteria"/>
</dbReference>
<dbReference type="HOGENOM" id="CLU_065898_2_2_9"/>
<dbReference type="OrthoDB" id="9809045at2"/>
<dbReference type="PhylomeDB" id="P59125"/>
<dbReference type="Proteomes" id="UP000002512">
    <property type="component" value="Chromosome"/>
</dbReference>
<dbReference type="GO" id="GO:0015935">
    <property type="term" value="C:small ribosomal subunit"/>
    <property type="evidence" value="ECO:0007669"/>
    <property type="project" value="InterPro"/>
</dbReference>
<dbReference type="GO" id="GO:0019843">
    <property type="term" value="F:rRNA binding"/>
    <property type="evidence" value="ECO:0007669"/>
    <property type="project" value="UniProtKB-UniRule"/>
</dbReference>
<dbReference type="GO" id="GO:0003735">
    <property type="term" value="F:structural constituent of ribosome"/>
    <property type="evidence" value="ECO:0007669"/>
    <property type="project" value="InterPro"/>
</dbReference>
<dbReference type="GO" id="GO:0006412">
    <property type="term" value="P:translation"/>
    <property type="evidence" value="ECO:0007669"/>
    <property type="project" value="UniProtKB-UniRule"/>
</dbReference>
<dbReference type="FunFam" id="3.30.160.20:FF:000001">
    <property type="entry name" value="30S ribosomal protein S5"/>
    <property type="match status" value="1"/>
</dbReference>
<dbReference type="FunFam" id="3.30.230.10:FF:000002">
    <property type="entry name" value="30S ribosomal protein S5"/>
    <property type="match status" value="1"/>
</dbReference>
<dbReference type="Gene3D" id="3.30.160.20">
    <property type="match status" value="1"/>
</dbReference>
<dbReference type="Gene3D" id="3.30.230.10">
    <property type="match status" value="1"/>
</dbReference>
<dbReference type="HAMAP" id="MF_01307_B">
    <property type="entry name" value="Ribosomal_uS5_B"/>
    <property type="match status" value="1"/>
</dbReference>
<dbReference type="InterPro" id="IPR020568">
    <property type="entry name" value="Ribosomal_Su5_D2-typ_SF"/>
</dbReference>
<dbReference type="InterPro" id="IPR000851">
    <property type="entry name" value="Ribosomal_uS5"/>
</dbReference>
<dbReference type="InterPro" id="IPR005712">
    <property type="entry name" value="Ribosomal_uS5_bac-type"/>
</dbReference>
<dbReference type="InterPro" id="IPR005324">
    <property type="entry name" value="Ribosomal_uS5_C"/>
</dbReference>
<dbReference type="InterPro" id="IPR013810">
    <property type="entry name" value="Ribosomal_uS5_N"/>
</dbReference>
<dbReference type="InterPro" id="IPR018192">
    <property type="entry name" value="Ribosomal_uS5_N_CS"/>
</dbReference>
<dbReference type="InterPro" id="IPR014721">
    <property type="entry name" value="Ribsml_uS5_D2-typ_fold_subgr"/>
</dbReference>
<dbReference type="NCBIfam" id="TIGR01021">
    <property type="entry name" value="rpsE_bact"/>
    <property type="match status" value="1"/>
</dbReference>
<dbReference type="PANTHER" id="PTHR48277">
    <property type="entry name" value="MITOCHONDRIAL RIBOSOMAL PROTEIN S5"/>
    <property type="match status" value="1"/>
</dbReference>
<dbReference type="PANTHER" id="PTHR48277:SF1">
    <property type="entry name" value="MITOCHONDRIAL RIBOSOMAL PROTEIN S5"/>
    <property type="match status" value="1"/>
</dbReference>
<dbReference type="Pfam" id="PF00333">
    <property type="entry name" value="Ribosomal_S5"/>
    <property type="match status" value="1"/>
</dbReference>
<dbReference type="Pfam" id="PF03719">
    <property type="entry name" value="Ribosomal_S5_C"/>
    <property type="match status" value="1"/>
</dbReference>
<dbReference type="SUPFAM" id="SSF54768">
    <property type="entry name" value="dsRNA-binding domain-like"/>
    <property type="match status" value="1"/>
</dbReference>
<dbReference type="SUPFAM" id="SSF54211">
    <property type="entry name" value="Ribosomal protein S5 domain 2-like"/>
    <property type="match status" value="1"/>
</dbReference>
<dbReference type="PROSITE" id="PS00585">
    <property type="entry name" value="RIBOSOMAL_S5"/>
    <property type="match status" value="1"/>
</dbReference>
<dbReference type="PROSITE" id="PS50881">
    <property type="entry name" value="S5_DSRBD"/>
    <property type="match status" value="1"/>
</dbReference>
<accession>P59125</accession>
<gene>
    <name evidence="1" type="primary">rpsE</name>
    <name type="synonym">rs5</name>
    <name type="ordered locus">SMU_2009</name>
</gene>
<reference key="1">
    <citation type="journal article" date="2002" name="Proc. Natl. Acad. Sci. U.S.A.">
        <title>Genome sequence of Streptococcus mutans UA159, a cariogenic dental pathogen.</title>
        <authorList>
            <person name="Ajdic D.J."/>
            <person name="McShan W.M."/>
            <person name="McLaughlin R.E."/>
            <person name="Savic G."/>
            <person name="Chang J."/>
            <person name="Carson M.B."/>
            <person name="Primeaux C."/>
            <person name="Tian R."/>
            <person name="Kenton S."/>
            <person name="Jia H.G."/>
            <person name="Lin S.P."/>
            <person name="Qian Y."/>
            <person name="Li S."/>
            <person name="Zhu H."/>
            <person name="Najar F.Z."/>
            <person name="Lai H."/>
            <person name="White J."/>
            <person name="Roe B.A."/>
            <person name="Ferretti J.J."/>
        </authorList>
    </citation>
    <scope>NUCLEOTIDE SEQUENCE [LARGE SCALE GENOMIC DNA]</scope>
    <source>
        <strain>ATCC 700610 / UA159</strain>
    </source>
</reference>
<feature type="chain" id="PRO_0000131605" description="Small ribosomal subunit protein uS5">
    <location>
        <begin position="1"/>
        <end position="164"/>
    </location>
</feature>
<feature type="domain" description="S5 DRBM" evidence="1">
    <location>
        <begin position="10"/>
        <end position="73"/>
    </location>
</feature>